<proteinExistence type="inferred from homology"/>
<dbReference type="EC" id="2.7.1.6" evidence="1"/>
<dbReference type="EMBL" id="CP000802">
    <property type="protein sequence ID" value="ABV05167.1"/>
    <property type="molecule type" value="Genomic_DNA"/>
</dbReference>
<dbReference type="RefSeq" id="WP_000053420.1">
    <property type="nucleotide sequence ID" value="NC_009800.1"/>
</dbReference>
<dbReference type="SMR" id="A7ZY13"/>
<dbReference type="KEGG" id="ecx:EcHS_A0811"/>
<dbReference type="HOGENOM" id="CLU_017814_2_1_6"/>
<dbReference type="UniPathway" id="UPA00214"/>
<dbReference type="GO" id="GO:0005829">
    <property type="term" value="C:cytosol"/>
    <property type="evidence" value="ECO:0007669"/>
    <property type="project" value="TreeGrafter"/>
</dbReference>
<dbReference type="GO" id="GO:0005524">
    <property type="term" value="F:ATP binding"/>
    <property type="evidence" value="ECO:0007669"/>
    <property type="project" value="UniProtKB-UniRule"/>
</dbReference>
<dbReference type="GO" id="GO:0004335">
    <property type="term" value="F:galactokinase activity"/>
    <property type="evidence" value="ECO:0007669"/>
    <property type="project" value="UniProtKB-UniRule"/>
</dbReference>
<dbReference type="GO" id="GO:0000287">
    <property type="term" value="F:magnesium ion binding"/>
    <property type="evidence" value="ECO:0007669"/>
    <property type="project" value="UniProtKB-UniRule"/>
</dbReference>
<dbReference type="GO" id="GO:0006012">
    <property type="term" value="P:galactose metabolic process"/>
    <property type="evidence" value="ECO:0007669"/>
    <property type="project" value="UniProtKB-UniRule"/>
</dbReference>
<dbReference type="FunFam" id="3.30.230.10:FF:000017">
    <property type="entry name" value="Galactokinase"/>
    <property type="match status" value="1"/>
</dbReference>
<dbReference type="FunFam" id="3.30.70.890:FF:000001">
    <property type="entry name" value="Galactokinase"/>
    <property type="match status" value="1"/>
</dbReference>
<dbReference type="Gene3D" id="3.30.230.10">
    <property type="match status" value="1"/>
</dbReference>
<dbReference type="Gene3D" id="3.30.70.890">
    <property type="entry name" value="GHMP kinase, C-terminal domain"/>
    <property type="match status" value="1"/>
</dbReference>
<dbReference type="HAMAP" id="MF_00246">
    <property type="entry name" value="Galactokinase"/>
    <property type="match status" value="1"/>
</dbReference>
<dbReference type="InterPro" id="IPR000705">
    <property type="entry name" value="Galactokinase"/>
</dbReference>
<dbReference type="InterPro" id="IPR022963">
    <property type="entry name" value="Galactokinase_bac"/>
</dbReference>
<dbReference type="InterPro" id="IPR019741">
    <property type="entry name" value="Galactokinase_CS"/>
</dbReference>
<dbReference type="InterPro" id="IPR019539">
    <property type="entry name" value="GalKase_N"/>
</dbReference>
<dbReference type="InterPro" id="IPR013750">
    <property type="entry name" value="GHMP_kinase_C_dom"/>
</dbReference>
<dbReference type="InterPro" id="IPR036554">
    <property type="entry name" value="GHMP_kinase_C_sf"/>
</dbReference>
<dbReference type="InterPro" id="IPR006204">
    <property type="entry name" value="GHMP_kinase_N_dom"/>
</dbReference>
<dbReference type="InterPro" id="IPR006203">
    <property type="entry name" value="GHMP_knse_ATP-bd_CS"/>
</dbReference>
<dbReference type="InterPro" id="IPR006206">
    <property type="entry name" value="Mevalonate/galactokinase"/>
</dbReference>
<dbReference type="InterPro" id="IPR020568">
    <property type="entry name" value="Ribosomal_Su5_D2-typ_SF"/>
</dbReference>
<dbReference type="InterPro" id="IPR014721">
    <property type="entry name" value="Ribsml_uS5_D2-typ_fold_subgr"/>
</dbReference>
<dbReference type="NCBIfam" id="TIGR00131">
    <property type="entry name" value="gal_kin"/>
    <property type="match status" value="1"/>
</dbReference>
<dbReference type="NCBIfam" id="NF003472">
    <property type="entry name" value="PRK05101.1"/>
    <property type="match status" value="1"/>
</dbReference>
<dbReference type="PANTHER" id="PTHR10457:SF7">
    <property type="entry name" value="GALACTOKINASE-RELATED"/>
    <property type="match status" value="1"/>
</dbReference>
<dbReference type="PANTHER" id="PTHR10457">
    <property type="entry name" value="MEVALONATE KINASE/GALACTOKINASE"/>
    <property type="match status" value="1"/>
</dbReference>
<dbReference type="Pfam" id="PF10509">
    <property type="entry name" value="GalKase_gal_bdg"/>
    <property type="match status" value="1"/>
</dbReference>
<dbReference type="Pfam" id="PF08544">
    <property type="entry name" value="GHMP_kinases_C"/>
    <property type="match status" value="1"/>
</dbReference>
<dbReference type="Pfam" id="PF00288">
    <property type="entry name" value="GHMP_kinases_N"/>
    <property type="match status" value="1"/>
</dbReference>
<dbReference type="PIRSF" id="PIRSF000530">
    <property type="entry name" value="Galactokinase"/>
    <property type="match status" value="1"/>
</dbReference>
<dbReference type="PRINTS" id="PR00473">
    <property type="entry name" value="GALCTOKINASE"/>
</dbReference>
<dbReference type="PRINTS" id="PR00959">
    <property type="entry name" value="MEVGALKINASE"/>
</dbReference>
<dbReference type="SUPFAM" id="SSF55060">
    <property type="entry name" value="GHMP Kinase, C-terminal domain"/>
    <property type="match status" value="1"/>
</dbReference>
<dbReference type="SUPFAM" id="SSF54211">
    <property type="entry name" value="Ribosomal protein S5 domain 2-like"/>
    <property type="match status" value="1"/>
</dbReference>
<dbReference type="PROSITE" id="PS00106">
    <property type="entry name" value="GALACTOKINASE"/>
    <property type="match status" value="1"/>
</dbReference>
<dbReference type="PROSITE" id="PS00627">
    <property type="entry name" value="GHMP_KINASES_ATP"/>
    <property type="match status" value="1"/>
</dbReference>
<gene>
    <name evidence="1" type="primary">galK</name>
    <name type="ordered locus">EcHS_A0811</name>
</gene>
<name>GAL1_ECOHS</name>
<reference key="1">
    <citation type="journal article" date="2008" name="J. Bacteriol.">
        <title>The pangenome structure of Escherichia coli: comparative genomic analysis of E. coli commensal and pathogenic isolates.</title>
        <authorList>
            <person name="Rasko D.A."/>
            <person name="Rosovitz M.J."/>
            <person name="Myers G.S.A."/>
            <person name="Mongodin E.F."/>
            <person name="Fricke W.F."/>
            <person name="Gajer P."/>
            <person name="Crabtree J."/>
            <person name="Sebaihia M."/>
            <person name="Thomson N.R."/>
            <person name="Chaudhuri R."/>
            <person name="Henderson I.R."/>
            <person name="Sperandio V."/>
            <person name="Ravel J."/>
        </authorList>
    </citation>
    <scope>NUCLEOTIDE SEQUENCE [LARGE SCALE GENOMIC DNA]</scope>
    <source>
        <strain>HS</strain>
    </source>
</reference>
<sequence>MSLKEKTQSLFANAFGYPATHTIQAPGRVNLIGEHTDYNDGFVLPCAIDYQTVISCAPRDDRKVRVMAADYENQLDEFSLDAPIVAHENYQWANYVRGVVKHLQLRNNSFGGVDMVISGNVPQGAGLSSSASLEVAVGTVLQQLYHLPLDGAQIALNGQEAENQFVGCNCGIMDQLISALGKKDHALLIDCRSLGTKAVSMPKGVAVVIINSNFKRTLVGSEYNTRREQCETGARFFQQPALRDVTIEEFNAVAHELDPIVAKRVRHILTENARTVEAASALEQGDLKRMSELMAESHASMRDDFEITVPQIDTLVEIVKAVIGDKGGVRMTGGGFGGCIVALIPEELVPAVQQAVAEQYEAKTGIKETFYVCKPSQGAGQC</sequence>
<accession>A7ZY13</accession>
<feature type="chain" id="PRO_1000059003" description="Galactokinase">
    <location>
        <begin position="1"/>
        <end position="382"/>
    </location>
</feature>
<feature type="active site" description="Proton acceptor" evidence="1">
    <location>
        <position position="174"/>
    </location>
</feature>
<feature type="binding site" evidence="1">
    <location>
        <begin position="34"/>
        <end position="37"/>
    </location>
    <ligand>
        <name>substrate</name>
    </ligand>
</feature>
<feature type="binding site" evidence="1">
    <location>
        <begin position="124"/>
        <end position="130"/>
    </location>
    <ligand>
        <name>ATP</name>
        <dbReference type="ChEBI" id="CHEBI:30616"/>
    </ligand>
</feature>
<feature type="binding site" evidence="1">
    <location>
        <position position="130"/>
    </location>
    <ligand>
        <name>Mg(2+)</name>
        <dbReference type="ChEBI" id="CHEBI:18420"/>
    </ligand>
</feature>
<feature type="binding site" evidence="1">
    <location>
        <position position="162"/>
    </location>
    <ligand>
        <name>Mg(2+)</name>
        <dbReference type="ChEBI" id="CHEBI:18420"/>
    </ligand>
</feature>
<feature type="binding site" evidence="1">
    <location>
        <position position="223"/>
    </location>
    <ligand>
        <name>substrate</name>
    </ligand>
</feature>
<feature type="site" description="Transition state stabilizer" evidence="1">
    <location>
        <position position="28"/>
    </location>
</feature>
<evidence type="ECO:0000255" key="1">
    <source>
        <dbReference type="HAMAP-Rule" id="MF_00246"/>
    </source>
</evidence>
<protein>
    <recommendedName>
        <fullName evidence="1">Galactokinase</fullName>
        <ecNumber evidence="1">2.7.1.6</ecNumber>
    </recommendedName>
    <alternativeName>
        <fullName evidence="1">Galactose kinase</fullName>
    </alternativeName>
</protein>
<organism>
    <name type="scientific">Escherichia coli O9:H4 (strain HS)</name>
    <dbReference type="NCBI Taxonomy" id="331112"/>
    <lineage>
        <taxon>Bacteria</taxon>
        <taxon>Pseudomonadati</taxon>
        <taxon>Pseudomonadota</taxon>
        <taxon>Gammaproteobacteria</taxon>
        <taxon>Enterobacterales</taxon>
        <taxon>Enterobacteriaceae</taxon>
        <taxon>Escherichia</taxon>
    </lineage>
</organism>
<keyword id="KW-0067">ATP-binding</keyword>
<keyword id="KW-0119">Carbohydrate metabolism</keyword>
<keyword id="KW-0963">Cytoplasm</keyword>
<keyword id="KW-0299">Galactose metabolism</keyword>
<keyword id="KW-0418">Kinase</keyword>
<keyword id="KW-0460">Magnesium</keyword>
<keyword id="KW-0479">Metal-binding</keyword>
<keyword id="KW-0547">Nucleotide-binding</keyword>
<keyword id="KW-0808">Transferase</keyword>
<comment type="function">
    <text evidence="1">Catalyzes the transfer of the gamma-phosphate of ATP to D-galactose to form alpha-D-galactose-1-phosphate (Gal-1-P).</text>
</comment>
<comment type="catalytic activity">
    <reaction evidence="1">
        <text>alpha-D-galactose + ATP = alpha-D-galactose 1-phosphate + ADP + H(+)</text>
        <dbReference type="Rhea" id="RHEA:13553"/>
        <dbReference type="ChEBI" id="CHEBI:15378"/>
        <dbReference type="ChEBI" id="CHEBI:28061"/>
        <dbReference type="ChEBI" id="CHEBI:30616"/>
        <dbReference type="ChEBI" id="CHEBI:58336"/>
        <dbReference type="ChEBI" id="CHEBI:456216"/>
        <dbReference type="EC" id="2.7.1.6"/>
    </reaction>
</comment>
<comment type="pathway">
    <text evidence="1">Carbohydrate metabolism; galactose metabolism.</text>
</comment>
<comment type="subcellular location">
    <subcellularLocation>
        <location evidence="1">Cytoplasm</location>
    </subcellularLocation>
</comment>
<comment type="similarity">
    <text evidence="1">Belongs to the GHMP kinase family. GalK subfamily.</text>
</comment>